<evidence type="ECO:0000250" key="1"/>
<evidence type="ECO:0000255" key="2">
    <source>
        <dbReference type="PROSITE-ProRule" id="PRU10009"/>
    </source>
</evidence>
<evidence type="ECO:0000305" key="3"/>
<comment type="catalytic activity">
    <reaction>
        <text>D-glyceraldehyde 3-phosphate + phosphate + NADP(+) = (2R)-3-phospho-glyceroyl phosphate + NADPH + H(+)</text>
        <dbReference type="Rhea" id="RHEA:10296"/>
        <dbReference type="ChEBI" id="CHEBI:15378"/>
        <dbReference type="ChEBI" id="CHEBI:43474"/>
        <dbReference type="ChEBI" id="CHEBI:57604"/>
        <dbReference type="ChEBI" id="CHEBI:57783"/>
        <dbReference type="ChEBI" id="CHEBI:58349"/>
        <dbReference type="ChEBI" id="CHEBI:59776"/>
        <dbReference type="EC" id="1.2.1.13"/>
    </reaction>
</comment>
<comment type="pathway">
    <text>Carbohydrate biosynthesis; Calvin cycle.</text>
</comment>
<comment type="subunit">
    <text evidence="1">Tetramer of either four A chains (GAPDH 2) or two A and two B chains (GAPDH 1).</text>
</comment>
<comment type="subcellular location">
    <subcellularLocation>
        <location evidence="1">Plastid</location>
        <location evidence="1">Chloroplast</location>
    </subcellularLocation>
</comment>
<comment type="miscellaneous">
    <text>Plants contain two types of GAPDH: cytosolic forms which participate in glycolysis and chloroplast forms which participate in photosynthesis. All the forms are encoded by distinct genes.</text>
</comment>
<comment type="similarity">
    <text evidence="3">Belongs to the glyceraldehyde-3-phosphate dehydrogenase family.</text>
</comment>
<keyword id="KW-0113">Calvin cycle</keyword>
<keyword id="KW-0150">Chloroplast</keyword>
<keyword id="KW-0521">NADP</keyword>
<keyword id="KW-0560">Oxidoreductase</keyword>
<keyword id="KW-0934">Plastid</keyword>
<keyword id="KW-1185">Reference proteome</keyword>
<keyword id="KW-0809">Transit peptide</keyword>
<gene>
    <name type="primary">GAPA</name>
    <name type="synonym">GPA1</name>
</gene>
<protein>
    <recommendedName>
        <fullName>Glyceraldehyde-3-phosphate dehydrogenase A, chloroplastic</fullName>
        <ecNumber>1.2.1.13</ecNumber>
    </recommendedName>
    <alternativeName>
        <fullName>NADP-dependent glyceraldehydephosphate dehydrogenase subunit A</fullName>
    </alternativeName>
</protein>
<dbReference type="EC" id="1.2.1.13"/>
<dbReference type="EMBL" id="X15408">
    <property type="protein sequence ID" value="CAA33455.1"/>
    <property type="molecule type" value="Genomic_DNA"/>
</dbReference>
<dbReference type="EMBL" id="M18976">
    <property type="protein sequence ID" value="AAA33464.1"/>
    <property type="molecule type" value="Genomic_DNA"/>
</dbReference>
<dbReference type="EMBL" id="M31481">
    <property type="protein sequence ID" value="AAA33484.1"/>
    <property type="molecule type" value="mRNA"/>
</dbReference>
<dbReference type="EMBL" id="M31483">
    <property type="protein sequence ID" value="AAA33485.1"/>
    <property type="molecule type" value="mRNA"/>
</dbReference>
<dbReference type="PIR" id="A30890">
    <property type="entry name" value="DEZMG3"/>
</dbReference>
<dbReference type="RefSeq" id="NP_001105414.1">
    <property type="nucleotide sequence ID" value="NM_001111944.1"/>
</dbReference>
<dbReference type="SMR" id="P09315"/>
<dbReference type="FunCoup" id="P09315">
    <property type="interactions" value="1150"/>
</dbReference>
<dbReference type="STRING" id="4577.P09315"/>
<dbReference type="PaxDb" id="4577-GRMZM2G162845_P01"/>
<dbReference type="GeneID" id="542368"/>
<dbReference type="KEGG" id="zma:542368"/>
<dbReference type="MaizeGDB" id="13872"/>
<dbReference type="eggNOG" id="KOG0657">
    <property type="taxonomic scope" value="Eukaryota"/>
</dbReference>
<dbReference type="InParanoid" id="P09315"/>
<dbReference type="OrthoDB" id="1152826at2759"/>
<dbReference type="UniPathway" id="UPA00116"/>
<dbReference type="Proteomes" id="UP000007305">
    <property type="component" value="Unplaced"/>
</dbReference>
<dbReference type="ExpressionAtlas" id="P09315">
    <property type="expression patterns" value="baseline and differential"/>
</dbReference>
<dbReference type="GO" id="GO:0009507">
    <property type="term" value="C:chloroplast"/>
    <property type="evidence" value="ECO:0007669"/>
    <property type="project" value="UniProtKB-SubCell"/>
</dbReference>
<dbReference type="GO" id="GO:0004365">
    <property type="term" value="F:glyceraldehyde-3-phosphate dehydrogenase (NAD+) (phosphorylating) activity"/>
    <property type="evidence" value="ECO:0000318"/>
    <property type="project" value="GO_Central"/>
</dbReference>
<dbReference type="GO" id="GO:0047100">
    <property type="term" value="F:glyceraldehyde-3-phosphate dehydrogenase (NADP+) (phosphorylating) activity"/>
    <property type="evidence" value="ECO:0007669"/>
    <property type="project" value="UniProtKB-EC"/>
</dbReference>
<dbReference type="GO" id="GO:0051287">
    <property type="term" value="F:NAD binding"/>
    <property type="evidence" value="ECO:0000318"/>
    <property type="project" value="GO_Central"/>
</dbReference>
<dbReference type="GO" id="GO:0050661">
    <property type="term" value="F:NADP binding"/>
    <property type="evidence" value="ECO:0007669"/>
    <property type="project" value="InterPro"/>
</dbReference>
<dbReference type="GO" id="GO:0006006">
    <property type="term" value="P:glucose metabolic process"/>
    <property type="evidence" value="ECO:0000318"/>
    <property type="project" value="GO_Central"/>
</dbReference>
<dbReference type="GO" id="GO:0019253">
    <property type="term" value="P:reductive pentose-phosphate cycle"/>
    <property type="evidence" value="ECO:0007669"/>
    <property type="project" value="UniProtKB-UniPathway"/>
</dbReference>
<dbReference type="GO" id="GO:0009416">
    <property type="term" value="P:response to light stimulus"/>
    <property type="evidence" value="ECO:0000270"/>
    <property type="project" value="AgBase"/>
</dbReference>
<dbReference type="CDD" id="cd18126">
    <property type="entry name" value="GAPDH_I_C"/>
    <property type="match status" value="1"/>
</dbReference>
<dbReference type="CDD" id="cd05214">
    <property type="entry name" value="GAPDH_I_N"/>
    <property type="match status" value="1"/>
</dbReference>
<dbReference type="FunFam" id="3.30.360.10:FF:000002">
    <property type="entry name" value="Glyceraldehyde-3-phosphate dehydrogenase"/>
    <property type="match status" value="1"/>
</dbReference>
<dbReference type="FunFam" id="3.40.50.720:FF:000001">
    <property type="entry name" value="Glyceraldehyde-3-phosphate dehydrogenase"/>
    <property type="match status" value="1"/>
</dbReference>
<dbReference type="Gene3D" id="3.30.360.10">
    <property type="entry name" value="Dihydrodipicolinate Reductase, domain 2"/>
    <property type="match status" value="1"/>
</dbReference>
<dbReference type="Gene3D" id="3.40.50.720">
    <property type="entry name" value="NAD(P)-binding Rossmann-like Domain"/>
    <property type="match status" value="1"/>
</dbReference>
<dbReference type="InterPro" id="IPR020831">
    <property type="entry name" value="GlycerAld/Erythrose_P_DH"/>
</dbReference>
<dbReference type="InterPro" id="IPR020830">
    <property type="entry name" value="GlycerAld_3-P_DH_AS"/>
</dbReference>
<dbReference type="InterPro" id="IPR020829">
    <property type="entry name" value="GlycerAld_3-P_DH_cat"/>
</dbReference>
<dbReference type="InterPro" id="IPR020828">
    <property type="entry name" value="GlycerAld_3-P_DH_NAD(P)-bd"/>
</dbReference>
<dbReference type="InterPro" id="IPR006424">
    <property type="entry name" value="Glyceraldehyde-3-P_DH_1"/>
</dbReference>
<dbReference type="InterPro" id="IPR036291">
    <property type="entry name" value="NAD(P)-bd_dom_sf"/>
</dbReference>
<dbReference type="NCBIfam" id="TIGR01534">
    <property type="entry name" value="GAPDH-I"/>
    <property type="match status" value="1"/>
</dbReference>
<dbReference type="PANTHER" id="PTHR43148">
    <property type="entry name" value="GLYCERALDEHYDE-3-PHOSPHATE DEHYDROGENASE 2"/>
    <property type="match status" value="1"/>
</dbReference>
<dbReference type="Pfam" id="PF02800">
    <property type="entry name" value="Gp_dh_C"/>
    <property type="match status" value="1"/>
</dbReference>
<dbReference type="Pfam" id="PF00044">
    <property type="entry name" value="Gp_dh_N"/>
    <property type="match status" value="1"/>
</dbReference>
<dbReference type="PRINTS" id="PR00078">
    <property type="entry name" value="G3PDHDRGNASE"/>
</dbReference>
<dbReference type="SMART" id="SM00846">
    <property type="entry name" value="Gp_dh_N"/>
    <property type="match status" value="1"/>
</dbReference>
<dbReference type="SUPFAM" id="SSF55347">
    <property type="entry name" value="Glyceraldehyde-3-phosphate dehydrogenase-like, C-terminal domain"/>
    <property type="match status" value="1"/>
</dbReference>
<dbReference type="SUPFAM" id="SSF51735">
    <property type="entry name" value="NAD(P)-binding Rossmann-fold domains"/>
    <property type="match status" value="1"/>
</dbReference>
<dbReference type="PROSITE" id="PS00071">
    <property type="entry name" value="GAPDH"/>
    <property type="match status" value="1"/>
</dbReference>
<reference key="1">
    <citation type="journal article" date="1989" name="J. Mol. Evol.">
        <title>Strong functional GC pressure in a light-regulated maize gene encoding subunit GAPA of chloroplast glyceraldehyde-3-phosphate dehydrogenase: implications for the evolution of GAPA pseudogenes.</title>
        <authorList>
            <person name="Quigley F."/>
            <person name="Brinkmann H."/>
            <person name="Martin W.F."/>
            <person name="Cerff R."/>
        </authorList>
    </citation>
    <scope>NUCLEOTIDE SEQUENCE</scope>
</reference>
<reference key="2">
    <citation type="journal article" date="1988" name="Proc. Natl. Acad. Sci. U.S.A.">
        <title>Intron conservation across the prokaryote-eukaryote boundary: structure of the nuclear gene for chloroplast glyceraldehyde-3-phosphate dehydrogenase from maize.</title>
        <authorList>
            <person name="Quigley F."/>
            <person name="Martin W.F."/>
            <person name="Cerff R."/>
        </authorList>
    </citation>
    <scope>NUCLEOTIDE SEQUENCE [GENOMIC DNA]</scope>
</reference>
<reference key="3">
    <citation type="journal article" date="1989" name="Plant Physiol.">
        <title>cDNA clones for corn leaf NADH: nitrate reductase and chloroplast NAD(P)(+): glyceraldehyde-3-phosphate dehydrogenase.</title>
        <authorList>
            <person name="Gowri G."/>
            <person name="Campbell W.H."/>
        </authorList>
    </citation>
    <scope>NUCLEOTIDE SEQUENCE OF 1-125 AND 301-403</scope>
    <source>
        <strain>cv. W64 X W128E</strain>
        <tissue>Leaf</tissue>
    </source>
</reference>
<proteinExistence type="evidence at transcript level"/>
<accession>P09315</accession>
<accession>P15985</accession>
<name>G3PA_MAIZE</name>
<organism>
    <name type="scientific">Zea mays</name>
    <name type="common">Maize</name>
    <dbReference type="NCBI Taxonomy" id="4577"/>
    <lineage>
        <taxon>Eukaryota</taxon>
        <taxon>Viridiplantae</taxon>
        <taxon>Streptophyta</taxon>
        <taxon>Embryophyta</taxon>
        <taxon>Tracheophyta</taxon>
        <taxon>Spermatophyta</taxon>
        <taxon>Magnoliopsida</taxon>
        <taxon>Liliopsida</taxon>
        <taxon>Poales</taxon>
        <taxon>Poaceae</taxon>
        <taxon>PACMAD clade</taxon>
        <taxon>Panicoideae</taxon>
        <taxon>Andropogonodae</taxon>
        <taxon>Andropogoneae</taxon>
        <taxon>Tripsacinae</taxon>
        <taxon>Zea</taxon>
    </lineage>
</organism>
<feature type="transit peptide" description="Chloroplast">
    <location>
        <begin position="1"/>
        <end position="66"/>
    </location>
</feature>
<feature type="chain" id="PRO_0000010422" description="Glyceraldehyde-3-phosphate dehydrogenase A, chloroplastic">
    <location>
        <begin position="67"/>
        <end position="403"/>
    </location>
</feature>
<feature type="active site" description="Nucleophile" evidence="2">
    <location>
        <position position="220"/>
    </location>
</feature>
<feature type="binding site" evidence="1">
    <location>
        <begin position="77"/>
        <end position="78"/>
    </location>
    <ligand>
        <name>NADP(+)</name>
        <dbReference type="ChEBI" id="CHEBI:58349"/>
    </ligand>
</feature>
<feature type="binding site" evidence="1">
    <location>
        <position position="102"/>
    </location>
    <ligand>
        <name>NADP(+)</name>
        <dbReference type="ChEBI" id="CHEBI:58349"/>
    </ligand>
</feature>
<feature type="binding site" evidence="1">
    <location>
        <position position="147"/>
    </location>
    <ligand>
        <name>NADP(+)</name>
        <dbReference type="ChEBI" id="CHEBI:58349"/>
    </ligand>
</feature>
<feature type="binding site" evidence="1">
    <location>
        <begin position="219"/>
        <end position="221"/>
    </location>
    <ligand>
        <name>D-glyceraldehyde 3-phosphate</name>
        <dbReference type="ChEBI" id="CHEBI:59776"/>
    </ligand>
</feature>
<feature type="binding site" evidence="1">
    <location>
        <position position="250"/>
    </location>
    <ligand>
        <name>D-glyceraldehyde 3-phosphate</name>
        <dbReference type="ChEBI" id="CHEBI:59776"/>
    </ligand>
</feature>
<feature type="binding site" evidence="1">
    <location>
        <position position="265"/>
    </location>
    <ligand>
        <name>D-glyceraldehyde 3-phosphate</name>
        <dbReference type="ChEBI" id="CHEBI:59776"/>
    </ligand>
</feature>
<feature type="binding site" evidence="1">
    <location>
        <begin position="278"/>
        <end position="279"/>
    </location>
    <ligand>
        <name>D-glyceraldehyde 3-phosphate</name>
        <dbReference type="ChEBI" id="CHEBI:59776"/>
    </ligand>
</feature>
<feature type="binding site" evidence="1">
    <location>
        <position position="301"/>
    </location>
    <ligand>
        <name>D-glyceraldehyde 3-phosphate</name>
        <dbReference type="ChEBI" id="CHEBI:59776"/>
    </ligand>
</feature>
<feature type="binding site" evidence="1">
    <location>
        <position position="383"/>
    </location>
    <ligand>
        <name>NADP(+)</name>
        <dbReference type="ChEBI" id="CHEBI:58349"/>
    </ligand>
</feature>
<feature type="site" description="Activates thiol group during catalysis" evidence="1">
    <location>
        <position position="247"/>
    </location>
</feature>
<sequence>MASSMLSATTVPLQQGGGLSEFSGLRSSASLPMRRNATSDDFMSAVSFRTHAVGTSGGPRRAPTEAKLKVAINGFGRIGRNFLRCWHGRGDASPLDVIAINDTGGVKQASHLLKYDSTLGIFDADVKPVGDNAISVDGKVIKVVSDRNPSNLPWGELGIDLVIEGTGVFVDREGAGKHIQAGAKKVLITAPGKGDIPTYVVGVNADQYNPDEPIISNASCTTNCLAPFVKVLDQKFGIIKGTMTTTHSYTGDQRLLDASHRDLRRARAAALNIVPTSTGAAKAVSLVLPNLKGKLNGIALRVPTPNVSVVDLVVQVSKKTLAEEVNQAFRDAAANELTGILEVCDVPLVSVDFRCSDVSSTIDASLTMVMGDDMVKVISWYDNEWGYSQRVVDLADICANQWK</sequence>